<feature type="chain" id="PRO_0000265433" description="Small ribosomal subunit protein uS19">
    <location>
        <begin position="1"/>
        <end position="92"/>
    </location>
</feature>
<proteinExistence type="inferred from homology"/>
<comment type="function">
    <text evidence="1">Protein S19 forms a complex with S13 that binds strongly to the 16S ribosomal RNA.</text>
</comment>
<comment type="similarity">
    <text evidence="1">Belongs to the universal ribosomal protein uS19 family.</text>
</comment>
<sequence>MPRSLKKGPFIDLHLLKKVEKAVESGDKKPLRTWSRRSTIFPNMIGLTIAVHNGRQHVPVFVTDEMVGHKLGEFAPTRTYRGHAADKKAKKK</sequence>
<keyword id="KW-1185">Reference proteome</keyword>
<keyword id="KW-0687">Ribonucleoprotein</keyword>
<keyword id="KW-0689">Ribosomal protein</keyword>
<keyword id="KW-0694">RNA-binding</keyword>
<keyword id="KW-0699">rRNA-binding</keyword>
<evidence type="ECO:0000255" key="1">
    <source>
        <dbReference type="HAMAP-Rule" id="MF_00531"/>
    </source>
</evidence>
<evidence type="ECO:0000305" key="2"/>
<organism>
    <name type="scientific">Shigella sonnei (strain Ss046)</name>
    <dbReference type="NCBI Taxonomy" id="300269"/>
    <lineage>
        <taxon>Bacteria</taxon>
        <taxon>Pseudomonadati</taxon>
        <taxon>Pseudomonadota</taxon>
        <taxon>Gammaproteobacteria</taxon>
        <taxon>Enterobacterales</taxon>
        <taxon>Enterobacteriaceae</taxon>
        <taxon>Shigella</taxon>
    </lineage>
</organism>
<reference key="1">
    <citation type="journal article" date="2005" name="Nucleic Acids Res.">
        <title>Genome dynamics and diversity of Shigella species, the etiologic agents of bacillary dysentery.</title>
        <authorList>
            <person name="Yang F."/>
            <person name="Yang J."/>
            <person name="Zhang X."/>
            <person name="Chen L."/>
            <person name="Jiang Y."/>
            <person name="Yan Y."/>
            <person name="Tang X."/>
            <person name="Wang J."/>
            <person name="Xiong Z."/>
            <person name="Dong J."/>
            <person name="Xue Y."/>
            <person name="Zhu Y."/>
            <person name="Xu X."/>
            <person name="Sun L."/>
            <person name="Chen S."/>
            <person name="Nie H."/>
            <person name="Peng J."/>
            <person name="Xu J."/>
            <person name="Wang Y."/>
            <person name="Yuan Z."/>
            <person name="Wen Y."/>
            <person name="Yao Z."/>
            <person name="Shen Y."/>
            <person name="Qiang B."/>
            <person name="Hou Y."/>
            <person name="Yu J."/>
            <person name="Jin Q."/>
        </authorList>
    </citation>
    <scope>NUCLEOTIDE SEQUENCE [LARGE SCALE GENOMIC DNA]</scope>
    <source>
        <strain>Ss046</strain>
    </source>
</reference>
<name>RS19_SHISS</name>
<protein>
    <recommendedName>
        <fullName evidence="1">Small ribosomal subunit protein uS19</fullName>
    </recommendedName>
    <alternativeName>
        <fullName evidence="2">30S ribosomal protein S19</fullName>
    </alternativeName>
</protein>
<accession>Q3YWU3</accession>
<gene>
    <name evidence="1" type="primary">rpsS</name>
    <name type="ordered locus">SSON_3457</name>
</gene>
<dbReference type="EMBL" id="CP000038">
    <property type="protein sequence ID" value="AAZ90019.1"/>
    <property type="molecule type" value="Genomic_DNA"/>
</dbReference>
<dbReference type="RefSeq" id="WP_001138117.1">
    <property type="nucleotide sequence ID" value="NC_007384.1"/>
</dbReference>
<dbReference type="SMR" id="Q3YWU3"/>
<dbReference type="GeneID" id="98390438"/>
<dbReference type="KEGG" id="ssn:SSON_3457"/>
<dbReference type="HOGENOM" id="CLU_144911_0_1_6"/>
<dbReference type="Proteomes" id="UP000002529">
    <property type="component" value="Chromosome"/>
</dbReference>
<dbReference type="GO" id="GO:0005737">
    <property type="term" value="C:cytoplasm"/>
    <property type="evidence" value="ECO:0007669"/>
    <property type="project" value="UniProtKB-ARBA"/>
</dbReference>
<dbReference type="GO" id="GO:0015935">
    <property type="term" value="C:small ribosomal subunit"/>
    <property type="evidence" value="ECO:0007669"/>
    <property type="project" value="InterPro"/>
</dbReference>
<dbReference type="GO" id="GO:0019843">
    <property type="term" value="F:rRNA binding"/>
    <property type="evidence" value="ECO:0007669"/>
    <property type="project" value="UniProtKB-UniRule"/>
</dbReference>
<dbReference type="GO" id="GO:0003735">
    <property type="term" value="F:structural constituent of ribosome"/>
    <property type="evidence" value="ECO:0007669"/>
    <property type="project" value="InterPro"/>
</dbReference>
<dbReference type="GO" id="GO:0000028">
    <property type="term" value="P:ribosomal small subunit assembly"/>
    <property type="evidence" value="ECO:0007669"/>
    <property type="project" value="TreeGrafter"/>
</dbReference>
<dbReference type="GO" id="GO:0006412">
    <property type="term" value="P:translation"/>
    <property type="evidence" value="ECO:0007669"/>
    <property type="project" value="UniProtKB-UniRule"/>
</dbReference>
<dbReference type="FunFam" id="3.30.860.10:FF:000001">
    <property type="entry name" value="30S ribosomal protein S19"/>
    <property type="match status" value="1"/>
</dbReference>
<dbReference type="Gene3D" id="3.30.860.10">
    <property type="entry name" value="30s Ribosomal Protein S19, Chain A"/>
    <property type="match status" value="1"/>
</dbReference>
<dbReference type="HAMAP" id="MF_00531">
    <property type="entry name" value="Ribosomal_uS19"/>
    <property type="match status" value="1"/>
</dbReference>
<dbReference type="InterPro" id="IPR002222">
    <property type="entry name" value="Ribosomal_uS19"/>
</dbReference>
<dbReference type="InterPro" id="IPR005732">
    <property type="entry name" value="Ribosomal_uS19_bac-type"/>
</dbReference>
<dbReference type="InterPro" id="IPR020934">
    <property type="entry name" value="Ribosomal_uS19_CS"/>
</dbReference>
<dbReference type="InterPro" id="IPR023575">
    <property type="entry name" value="Ribosomal_uS19_SF"/>
</dbReference>
<dbReference type="NCBIfam" id="TIGR01050">
    <property type="entry name" value="rpsS_bact"/>
    <property type="match status" value="1"/>
</dbReference>
<dbReference type="PANTHER" id="PTHR11880">
    <property type="entry name" value="RIBOSOMAL PROTEIN S19P FAMILY MEMBER"/>
    <property type="match status" value="1"/>
</dbReference>
<dbReference type="PANTHER" id="PTHR11880:SF8">
    <property type="entry name" value="SMALL RIBOSOMAL SUBUNIT PROTEIN US19M"/>
    <property type="match status" value="1"/>
</dbReference>
<dbReference type="Pfam" id="PF00203">
    <property type="entry name" value="Ribosomal_S19"/>
    <property type="match status" value="1"/>
</dbReference>
<dbReference type="PIRSF" id="PIRSF002144">
    <property type="entry name" value="Ribosomal_S19"/>
    <property type="match status" value="1"/>
</dbReference>
<dbReference type="PRINTS" id="PR00975">
    <property type="entry name" value="RIBOSOMALS19"/>
</dbReference>
<dbReference type="SUPFAM" id="SSF54570">
    <property type="entry name" value="Ribosomal protein S19"/>
    <property type="match status" value="1"/>
</dbReference>
<dbReference type="PROSITE" id="PS00323">
    <property type="entry name" value="RIBOSOMAL_S19"/>
    <property type="match status" value="1"/>
</dbReference>